<proteinExistence type="inferred from homology"/>
<reference key="1">
    <citation type="journal article" date="2001" name="Nature">
        <title>Complete genome sequence of a multiple drug resistant Salmonella enterica serovar Typhi CT18.</title>
        <authorList>
            <person name="Parkhill J."/>
            <person name="Dougan G."/>
            <person name="James K.D."/>
            <person name="Thomson N.R."/>
            <person name="Pickard D."/>
            <person name="Wain J."/>
            <person name="Churcher C.M."/>
            <person name="Mungall K.L."/>
            <person name="Bentley S.D."/>
            <person name="Holden M.T.G."/>
            <person name="Sebaihia M."/>
            <person name="Baker S."/>
            <person name="Basham D."/>
            <person name="Brooks K."/>
            <person name="Chillingworth T."/>
            <person name="Connerton P."/>
            <person name="Cronin A."/>
            <person name="Davis P."/>
            <person name="Davies R.M."/>
            <person name="Dowd L."/>
            <person name="White N."/>
            <person name="Farrar J."/>
            <person name="Feltwell T."/>
            <person name="Hamlin N."/>
            <person name="Haque A."/>
            <person name="Hien T.T."/>
            <person name="Holroyd S."/>
            <person name="Jagels K."/>
            <person name="Krogh A."/>
            <person name="Larsen T.S."/>
            <person name="Leather S."/>
            <person name="Moule S."/>
            <person name="O'Gaora P."/>
            <person name="Parry C."/>
            <person name="Quail M.A."/>
            <person name="Rutherford K.M."/>
            <person name="Simmonds M."/>
            <person name="Skelton J."/>
            <person name="Stevens K."/>
            <person name="Whitehead S."/>
            <person name="Barrell B.G."/>
        </authorList>
    </citation>
    <scope>NUCLEOTIDE SEQUENCE [LARGE SCALE GENOMIC DNA]</scope>
    <source>
        <strain>CT18</strain>
    </source>
</reference>
<reference key="2">
    <citation type="journal article" date="2003" name="J. Bacteriol.">
        <title>Comparative genomics of Salmonella enterica serovar Typhi strains Ty2 and CT18.</title>
        <authorList>
            <person name="Deng W."/>
            <person name="Liou S.-R."/>
            <person name="Plunkett G. III"/>
            <person name="Mayhew G.F."/>
            <person name="Rose D.J."/>
            <person name="Burland V."/>
            <person name="Kodoyianni V."/>
            <person name="Schwartz D.C."/>
            <person name="Blattner F.R."/>
        </authorList>
    </citation>
    <scope>NUCLEOTIDE SEQUENCE [LARGE SCALE GENOMIC DNA]</scope>
    <source>
        <strain>ATCC 700931 / Ty2</strain>
    </source>
</reference>
<evidence type="ECO:0000255" key="1">
    <source>
        <dbReference type="HAMAP-Rule" id="MF_00004"/>
    </source>
</evidence>
<dbReference type="EC" id="2.4.2.7" evidence="1"/>
<dbReference type="EMBL" id="AL513382">
    <property type="protein sequence ID" value="CAD04968.1"/>
    <property type="molecule type" value="Genomic_DNA"/>
</dbReference>
<dbReference type="EMBL" id="AE014613">
    <property type="protein sequence ID" value="AAO69968.1"/>
    <property type="molecule type" value="Genomic_DNA"/>
</dbReference>
<dbReference type="RefSeq" id="NP_455079.1">
    <property type="nucleotide sequence ID" value="NC_003198.1"/>
</dbReference>
<dbReference type="RefSeq" id="WP_000127348.1">
    <property type="nucleotide sequence ID" value="NZ_WSUR01000008.1"/>
</dbReference>
<dbReference type="SMR" id="Q8Z8T4"/>
<dbReference type="STRING" id="220341.gene:17584548"/>
<dbReference type="KEGG" id="stt:t2377"/>
<dbReference type="KEGG" id="sty:STY0527"/>
<dbReference type="PATRIC" id="fig|220341.7.peg.529"/>
<dbReference type="eggNOG" id="COG0503">
    <property type="taxonomic scope" value="Bacteria"/>
</dbReference>
<dbReference type="HOGENOM" id="CLU_063339_3_0_6"/>
<dbReference type="OMA" id="QAYDLEY"/>
<dbReference type="OrthoDB" id="9803963at2"/>
<dbReference type="UniPathway" id="UPA00588">
    <property type="reaction ID" value="UER00646"/>
</dbReference>
<dbReference type="Proteomes" id="UP000000541">
    <property type="component" value="Chromosome"/>
</dbReference>
<dbReference type="Proteomes" id="UP000002670">
    <property type="component" value="Chromosome"/>
</dbReference>
<dbReference type="GO" id="GO:0005829">
    <property type="term" value="C:cytosol"/>
    <property type="evidence" value="ECO:0007669"/>
    <property type="project" value="TreeGrafter"/>
</dbReference>
<dbReference type="GO" id="GO:0003999">
    <property type="term" value="F:adenine phosphoribosyltransferase activity"/>
    <property type="evidence" value="ECO:0007669"/>
    <property type="project" value="UniProtKB-UniRule"/>
</dbReference>
<dbReference type="GO" id="GO:0006168">
    <property type="term" value="P:adenine salvage"/>
    <property type="evidence" value="ECO:0007669"/>
    <property type="project" value="InterPro"/>
</dbReference>
<dbReference type="GO" id="GO:0044209">
    <property type="term" value="P:AMP salvage"/>
    <property type="evidence" value="ECO:0007669"/>
    <property type="project" value="UniProtKB-UniRule"/>
</dbReference>
<dbReference type="GO" id="GO:0006166">
    <property type="term" value="P:purine ribonucleoside salvage"/>
    <property type="evidence" value="ECO:0007669"/>
    <property type="project" value="UniProtKB-KW"/>
</dbReference>
<dbReference type="CDD" id="cd06223">
    <property type="entry name" value="PRTases_typeI"/>
    <property type="match status" value="1"/>
</dbReference>
<dbReference type="FunFam" id="3.40.50.2020:FF:000004">
    <property type="entry name" value="Adenine phosphoribosyltransferase"/>
    <property type="match status" value="1"/>
</dbReference>
<dbReference type="Gene3D" id="3.40.50.2020">
    <property type="match status" value="1"/>
</dbReference>
<dbReference type="HAMAP" id="MF_00004">
    <property type="entry name" value="Aden_phosphoribosyltr"/>
    <property type="match status" value="1"/>
</dbReference>
<dbReference type="InterPro" id="IPR005764">
    <property type="entry name" value="Ade_phspho_trans"/>
</dbReference>
<dbReference type="InterPro" id="IPR050120">
    <property type="entry name" value="Adenine_PRTase"/>
</dbReference>
<dbReference type="InterPro" id="IPR000836">
    <property type="entry name" value="PRibTrfase_dom"/>
</dbReference>
<dbReference type="InterPro" id="IPR029057">
    <property type="entry name" value="PRTase-like"/>
</dbReference>
<dbReference type="NCBIfam" id="TIGR01090">
    <property type="entry name" value="apt"/>
    <property type="match status" value="1"/>
</dbReference>
<dbReference type="NCBIfam" id="NF002632">
    <property type="entry name" value="PRK02304.1-1"/>
    <property type="match status" value="1"/>
</dbReference>
<dbReference type="NCBIfam" id="NF002634">
    <property type="entry name" value="PRK02304.1-3"/>
    <property type="match status" value="1"/>
</dbReference>
<dbReference type="NCBIfam" id="NF002636">
    <property type="entry name" value="PRK02304.1-5"/>
    <property type="match status" value="1"/>
</dbReference>
<dbReference type="PANTHER" id="PTHR11776">
    <property type="entry name" value="ADENINE PHOSPHORIBOSYLTRANSFERASE"/>
    <property type="match status" value="1"/>
</dbReference>
<dbReference type="PANTHER" id="PTHR11776:SF7">
    <property type="entry name" value="PHOSPHORIBOSYLTRANSFERASE DOMAIN-CONTAINING PROTEIN"/>
    <property type="match status" value="1"/>
</dbReference>
<dbReference type="Pfam" id="PF00156">
    <property type="entry name" value="Pribosyltran"/>
    <property type="match status" value="1"/>
</dbReference>
<dbReference type="SUPFAM" id="SSF53271">
    <property type="entry name" value="PRTase-like"/>
    <property type="match status" value="1"/>
</dbReference>
<dbReference type="PROSITE" id="PS00103">
    <property type="entry name" value="PUR_PYR_PR_TRANSFER"/>
    <property type="match status" value="1"/>
</dbReference>
<gene>
    <name evidence="1" type="primary">apt</name>
    <name type="ordered locus">STY0527</name>
    <name type="ordered locus">t2377</name>
</gene>
<sequence length="183" mass="20017">MTATAQQLEFLKNSIKSIQDYPKPGILFRDVTSLLEDPKAYALSIELLVERYKNAGITKVVGTEARGFLFGAPVALGLGVGFVPVRKPRKLPRETIAETYELEYGTDQLEIHVDAIKPGDNVLVVDDLLATGGTIEATVKLIRRLGGKVTDAAFIINLFDLGGEQRLEKQGITCYSLMPFPGH</sequence>
<protein>
    <recommendedName>
        <fullName evidence="1">Adenine phosphoribosyltransferase</fullName>
        <shortName evidence="1">APRT</shortName>
        <ecNumber evidence="1">2.4.2.7</ecNumber>
    </recommendedName>
</protein>
<feature type="chain" id="PRO_0000149444" description="Adenine phosphoribosyltransferase">
    <location>
        <begin position="1"/>
        <end position="183"/>
    </location>
</feature>
<comment type="function">
    <text evidence="1">Catalyzes a salvage reaction resulting in the formation of AMP, that is energically less costly than de novo synthesis.</text>
</comment>
<comment type="catalytic activity">
    <reaction evidence="1">
        <text>AMP + diphosphate = 5-phospho-alpha-D-ribose 1-diphosphate + adenine</text>
        <dbReference type="Rhea" id="RHEA:16609"/>
        <dbReference type="ChEBI" id="CHEBI:16708"/>
        <dbReference type="ChEBI" id="CHEBI:33019"/>
        <dbReference type="ChEBI" id="CHEBI:58017"/>
        <dbReference type="ChEBI" id="CHEBI:456215"/>
        <dbReference type="EC" id="2.4.2.7"/>
    </reaction>
</comment>
<comment type="pathway">
    <text evidence="1">Purine metabolism; AMP biosynthesis via salvage pathway; AMP from adenine: step 1/1.</text>
</comment>
<comment type="subunit">
    <text evidence="1">Homodimer.</text>
</comment>
<comment type="subcellular location">
    <subcellularLocation>
        <location evidence="1">Cytoplasm</location>
    </subcellularLocation>
</comment>
<comment type="similarity">
    <text evidence="1">Belongs to the purine/pyrimidine phosphoribosyltransferase family.</text>
</comment>
<accession>Q8Z8T4</accession>
<organism>
    <name type="scientific">Salmonella typhi</name>
    <dbReference type="NCBI Taxonomy" id="90370"/>
    <lineage>
        <taxon>Bacteria</taxon>
        <taxon>Pseudomonadati</taxon>
        <taxon>Pseudomonadota</taxon>
        <taxon>Gammaproteobacteria</taxon>
        <taxon>Enterobacterales</taxon>
        <taxon>Enterobacteriaceae</taxon>
        <taxon>Salmonella</taxon>
    </lineage>
</organism>
<keyword id="KW-0963">Cytoplasm</keyword>
<keyword id="KW-0328">Glycosyltransferase</keyword>
<keyword id="KW-0660">Purine salvage</keyword>
<keyword id="KW-0808">Transferase</keyword>
<name>APT_SALTI</name>